<accession>B7IBN2</accession>
<evidence type="ECO:0000255" key="1">
    <source>
        <dbReference type="HAMAP-Rule" id="MF_00472"/>
    </source>
</evidence>
<proteinExistence type="inferred from homology"/>
<gene>
    <name evidence="1" type="primary">ubiG</name>
    <name type="ordered locus">AB57_0076</name>
</gene>
<protein>
    <recommendedName>
        <fullName evidence="1">Ubiquinone biosynthesis O-methyltransferase</fullName>
    </recommendedName>
    <alternativeName>
        <fullName evidence="1">2-polyprenyl-6-hydroxyphenol methylase</fullName>
        <ecNumber evidence="1">2.1.1.222</ecNumber>
    </alternativeName>
    <alternativeName>
        <fullName evidence="1">3-demethylubiquinone 3-O-methyltransferase</fullName>
        <ecNumber evidence="1">2.1.1.64</ecNumber>
    </alternativeName>
</protein>
<feature type="chain" id="PRO_1000199662" description="Ubiquinone biosynthesis O-methyltransferase">
    <location>
        <begin position="1"/>
        <end position="237"/>
    </location>
</feature>
<feature type="binding site" evidence="1">
    <location>
        <position position="38"/>
    </location>
    <ligand>
        <name>S-adenosyl-L-methionine</name>
        <dbReference type="ChEBI" id="CHEBI:59789"/>
    </ligand>
</feature>
<feature type="binding site" evidence="1">
    <location>
        <position position="58"/>
    </location>
    <ligand>
        <name>S-adenosyl-L-methionine</name>
        <dbReference type="ChEBI" id="CHEBI:59789"/>
    </ligand>
</feature>
<feature type="binding site" evidence="1">
    <location>
        <position position="79"/>
    </location>
    <ligand>
        <name>S-adenosyl-L-methionine</name>
        <dbReference type="ChEBI" id="CHEBI:59789"/>
    </ligand>
</feature>
<feature type="binding site" evidence="1">
    <location>
        <position position="124"/>
    </location>
    <ligand>
        <name>S-adenosyl-L-methionine</name>
        <dbReference type="ChEBI" id="CHEBI:59789"/>
    </ligand>
</feature>
<keyword id="KW-0489">Methyltransferase</keyword>
<keyword id="KW-0949">S-adenosyl-L-methionine</keyword>
<keyword id="KW-0808">Transferase</keyword>
<keyword id="KW-0831">Ubiquinone biosynthesis</keyword>
<comment type="function">
    <text evidence="1">O-methyltransferase that catalyzes the 2 O-methylation steps in the ubiquinone biosynthetic pathway.</text>
</comment>
<comment type="catalytic activity">
    <reaction evidence="1">
        <text>a 3-demethylubiquinol + S-adenosyl-L-methionine = a ubiquinol + S-adenosyl-L-homocysteine + H(+)</text>
        <dbReference type="Rhea" id="RHEA:44380"/>
        <dbReference type="Rhea" id="RHEA-COMP:9566"/>
        <dbReference type="Rhea" id="RHEA-COMP:10914"/>
        <dbReference type="ChEBI" id="CHEBI:15378"/>
        <dbReference type="ChEBI" id="CHEBI:17976"/>
        <dbReference type="ChEBI" id="CHEBI:57856"/>
        <dbReference type="ChEBI" id="CHEBI:59789"/>
        <dbReference type="ChEBI" id="CHEBI:84422"/>
        <dbReference type="EC" id="2.1.1.64"/>
    </reaction>
</comment>
<comment type="catalytic activity">
    <reaction evidence="1">
        <text>a 3-(all-trans-polyprenyl)benzene-1,2-diol + S-adenosyl-L-methionine = a 2-methoxy-6-(all-trans-polyprenyl)phenol + S-adenosyl-L-homocysteine + H(+)</text>
        <dbReference type="Rhea" id="RHEA:31411"/>
        <dbReference type="Rhea" id="RHEA-COMP:9550"/>
        <dbReference type="Rhea" id="RHEA-COMP:9551"/>
        <dbReference type="ChEBI" id="CHEBI:15378"/>
        <dbReference type="ChEBI" id="CHEBI:57856"/>
        <dbReference type="ChEBI" id="CHEBI:59789"/>
        <dbReference type="ChEBI" id="CHEBI:62729"/>
        <dbReference type="ChEBI" id="CHEBI:62731"/>
        <dbReference type="EC" id="2.1.1.222"/>
    </reaction>
</comment>
<comment type="pathway">
    <text evidence="1">Cofactor biosynthesis; ubiquinone biosynthesis.</text>
</comment>
<comment type="similarity">
    <text evidence="1">Belongs to the methyltransferase superfamily. UbiG/COQ3 family.</text>
</comment>
<sequence>MSQLNVDLQEIAKFEALAAKWWDQHSEFRPLHQINPLRLNWIDERAGGLAGKKVLDVGCGGGILAESMARRGADVLGIDMGEAPLAVGRLHAQQENVQNIEYRQIPVEELAQEQAGQYDVVTCMEMMEHVPDPASIVKACQTLVKPGGHVFFSTINRNPKSYLFAIIGAEYVLRMLPKGTHDYHKFIRPSEMAHDIRNAGLTLKEMTGLHYNPITKRYWLAPNVDVNYMVHTVKTGA</sequence>
<reference key="1">
    <citation type="journal article" date="2008" name="J. Bacteriol.">
        <title>Comparative genome sequence analysis of multidrug-resistant Acinetobacter baumannii.</title>
        <authorList>
            <person name="Adams M.D."/>
            <person name="Goglin K."/>
            <person name="Molyneaux N."/>
            <person name="Hujer K.M."/>
            <person name="Lavender H."/>
            <person name="Jamison J.J."/>
            <person name="MacDonald I.J."/>
            <person name="Martin K.M."/>
            <person name="Russo T."/>
            <person name="Campagnari A.A."/>
            <person name="Hujer A.M."/>
            <person name="Bonomo R.A."/>
            <person name="Gill S.R."/>
        </authorList>
    </citation>
    <scope>NUCLEOTIDE SEQUENCE [LARGE SCALE GENOMIC DNA]</scope>
    <source>
        <strain>AB0057</strain>
    </source>
</reference>
<dbReference type="EC" id="2.1.1.222" evidence="1"/>
<dbReference type="EC" id="2.1.1.64" evidence="1"/>
<dbReference type="EMBL" id="CP001182">
    <property type="protein sequence ID" value="ACJ39507.1"/>
    <property type="molecule type" value="Genomic_DNA"/>
</dbReference>
<dbReference type="RefSeq" id="WP_000080759.1">
    <property type="nucleotide sequence ID" value="NC_011586.2"/>
</dbReference>
<dbReference type="SMR" id="B7IBN2"/>
<dbReference type="GeneID" id="92891998"/>
<dbReference type="KEGG" id="abn:AB57_0076"/>
<dbReference type="HOGENOM" id="CLU_042432_5_0_6"/>
<dbReference type="UniPathway" id="UPA00232"/>
<dbReference type="Proteomes" id="UP000007094">
    <property type="component" value="Chromosome"/>
</dbReference>
<dbReference type="GO" id="GO:0102208">
    <property type="term" value="F:2-polyprenyl-6-hydroxyphenol methylase activity"/>
    <property type="evidence" value="ECO:0007669"/>
    <property type="project" value="UniProtKB-EC"/>
</dbReference>
<dbReference type="GO" id="GO:0061542">
    <property type="term" value="F:3-demethylubiquinol 3-O-methyltransferase activity"/>
    <property type="evidence" value="ECO:0007669"/>
    <property type="project" value="UniProtKB-UniRule"/>
</dbReference>
<dbReference type="GO" id="GO:0010420">
    <property type="term" value="F:polyprenyldihydroxybenzoate methyltransferase activity"/>
    <property type="evidence" value="ECO:0007669"/>
    <property type="project" value="InterPro"/>
</dbReference>
<dbReference type="GO" id="GO:0032259">
    <property type="term" value="P:methylation"/>
    <property type="evidence" value="ECO:0007669"/>
    <property type="project" value="UniProtKB-KW"/>
</dbReference>
<dbReference type="CDD" id="cd02440">
    <property type="entry name" value="AdoMet_MTases"/>
    <property type="match status" value="1"/>
</dbReference>
<dbReference type="FunFam" id="3.40.50.150:FF:000028">
    <property type="entry name" value="Ubiquinone biosynthesis O-methyltransferase"/>
    <property type="match status" value="1"/>
</dbReference>
<dbReference type="Gene3D" id="3.40.50.150">
    <property type="entry name" value="Vaccinia Virus protein VP39"/>
    <property type="match status" value="1"/>
</dbReference>
<dbReference type="HAMAP" id="MF_00472">
    <property type="entry name" value="UbiG"/>
    <property type="match status" value="1"/>
</dbReference>
<dbReference type="InterPro" id="IPR029063">
    <property type="entry name" value="SAM-dependent_MTases_sf"/>
</dbReference>
<dbReference type="InterPro" id="IPR010233">
    <property type="entry name" value="UbiG_MeTrfase"/>
</dbReference>
<dbReference type="NCBIfam" id="TIGR01983">
    <property type="entry name" value="UbiG"/>
    <property type="match status" value="1"/>
</dbReference>
<dbReference type="PANTHER" id="PTHR43464">
    <property type="entry name" value="METHYLTRANSFERASE"/>
    <property type="match status" value="1"/>
</dbReference>
<dbReference type="PANTHER" id="PTHR43464:SF19">
    <property type="entry name" value="UBIQUINONE BIOSYNTHESIS O-METHYLTRANSFERASE, MITOCHONDRIAL"/>
    <property type="match status" value="1"/>
</dbReference>
<dbReference type="Pfam" id="PF13489">
    <property type="entry name" value="Methyltransf_23"/>
    <property type="match status" value="1"/>
</dbReference>
<dbReference type="SUPFAM" id="SSF53335">
    <property type="entry name" value="S-adenosyl-L-methionine-dependent methyltransferases"/>
    <property type="match status" value="1"/>
</dbReference>
<name>UBIG_ACIB5</name>
<organism>
    <name type="scientific">Acinetobacter baumannii (strain AB0057)</name>
    <dbReference type="NCBI Taxonomy" id="480119"/>
    <lineage>
        <taxon>Bacteria</taxon>
        <taxon>Pseudomonadati</taxon>
        <taxon>Pseudomonadota</taxon>
        <taxon>Gammaproteobacteria</taxon>
        <taxon>Moraxellales</taxon>
        <taxon>Moraxellaceae</taxon>
        <taxon>Acinetobacter</taxon>
        <taxon>Acinetobacter calcoaceticus/baumannii complex</taxon>
    </lineage>
</organism>